<sequence length="326" mass="34939">MLTLARQQQRQNIRWLLCLSVLMLLALLLSLCAGEQWISPGDWFSPRGELFVWQIRLPRTLAVLLVGAALAISGAVMQALFENPLAEPGLLGVSNGAGVGLIAAVLLGQGQLPNWALGLCAIAGALIITLILLRFARRHLSTSRLLLAGVALGIICSALMTWAIYFSTSVDLRQLMYWMMGGFGGVDWRQSWLMLALIPMLLWICCQSRPMNMLALGEISARQLGLPLWFWRNVLVAATGWMVGVSVALAGAIGFIGLVIPHILRLCGLTDHRALLPGCALAGASALLLADIVARLALAAAELPIGVVTATLGAPVFIWLLLKAGR</sequence>
<feature type="chain" id="PRO_1000201545" description="Vitamin B12 import system permease protein BtuC">
    <location>
        <begin position="1"/>
        <end position="326"/>
    </location>
</feature>
<feature type="transmembrane region" description="Helical" evidence="1">
    <location>
        <begin position="15"/>
        <end position="35"/>
    </location>
</feature>
<feature type="transmembrane region" description="Helical" evidence="1">
    <location>
        <begin position="61"/>
        <end position="81"/>
    </location>
</feature>
<feature type="transmembrane region" description="Helical" evidence="1">
    <location>
        <begin position="88"/>
        <end position="108"/>
    </location>
</feature>
<feature type="transmembrane region" description="Helical" evidence="1">
    <location>
        <begin position="112"/>
        <end position="132"/>
    </location>
</feature>
<feature type="transmembrane region" description="Helical" evidence="1">
    <location>
        <begin position="146"/>
        <end position="166"/>
    </location>
</feature>
<feature type="transmembrane region" description="Helical" evidence="1">
    <location>
        <begin position="184"/>
        <end position="204"/>
    </location>
</feature>
<feature type="transmembrane region" description="Helical" evidence="1">
    <location>
        <begin position="240"/>
        <end position="260"/>
    </location>
</feature>
<feature type="transmembrane region" description="Helical" evidence="1">
    <location>
        <begin position="274"/>
        <end position="294"/>
    </location>
</feature>
<feature type="transmembrane region" description="Helical" evidence="1">
    <location>
        <begin position="302"/>
        <end position="322"/>
    </location>
</feature>
<keyword id="KW-0997">Cell inner membrane</keyword>
<keyword id="KW-1003">Cell membrane</keyword>
<keyword id="KW-0472">Membrane</keyword>
<keyword id="KW-0812">Transmembrane</keyword>
<keyword id="KW-1133">Transmembrane helix</keyword>
<keyword id="KW-0813">Transport</keyword>
<gene>
    <name evidence="1" type="primary">btuC</name>
    <name type="ordered locus">ECH74115_2429</name>
</gene>
<evidence type="ECO:0000255" key="1">
    <source>
        <dbReference type="HAMAP-Rule" id="MF_01004"/>
    </source>
</evidence>
<comment type="function">
    <text evidence="1">Part of the ABC transporter complex BtuCDF involved in vitamin B12 import. Involved in the translocation of the substrate across the membrane.</text>
</comment>
<comment type="subunit">
    <text evidence="1">The complex is composed of two ATP-binding proteins (BtuD), two transmembrane proteins (BtuC) and a solute-binding protein (BtuF).</text>
</comment>
<comment type="subcellular location">
    <subcellularLocation>
        <location evidence="1">Cell inner membrane</location>
        <topology evidence="1">Multi-pass membrane protein</topology>
    </subcellularLocation>
</comment>
<comment type="similarity">
    <text evidence="1">Belongs to the binding-protein-dependent transport system permease family. FecCD subfamily.</text>
</comment>
<name>BTUC_ECO5E</name>
<proteinExistence type="inferred from homology"/>
<accession>B5YPZ9</accession>
<reference key="1">
    <citation type="journal article" date="2011" name="Proc. Natl. Acad. Sci. U.S.A.">
        <title>Genomic anatomy of Escherichia coli O157:H7 outbreaks.</title>
        <authorList>
            <person name="Eppinger M."/>
            <person name="Mammel M.K."/>
            <person name="Leclerc J.E."/>
            <person name="Ravel J."/>
            <person name="Cebula T.A."/>
        </authorList>
    </citation>
    <scope>NUCLEOTIDE SEQUENCE [LARGE SCALE GENOMIC DNA]</scope>
    <source>
        <strain>EC4115 / EHEC</strain>
    </source>
</reference>
<protein>
    <recommendedName>
        <fullName evidence="1">Vitamin B12 import system permease protein BtuC</fullName>
    </recommendedName>
</protein>
<dbReference type="EMBL" id="CP001164">
    <property type="protein sequence ID" value="ACI39494.1"/>
    <property type="molecule type" value="Genomic_DNA"/>
</dbReference>
<dbReference type="RefSeq" id="WP_000956513.1">
    <property type="nucleotide sequence ID" value="NC_011353.1"/>
</dbReference>
<dbReference type="SMR" id="B5YPZ9"/>
<dbReference type="KEGG" id="ecf:ECH74115_2429"/>
<dbReference type="HOGENOM" id="CLU_013016_0_3_6"/>
<dbReference type="GO" id="GO:0005886">
    <property type="term" value="C:plasma membrane"/>
    <property type="evidence" value="ECO:0007669"/>
    <property type="project" value="UniProtKB-SubCell"/>
</dbReference>
<dbReference type="GO" id="GO:0090482">
    <property type="term" value="F:vitamin transmembrane transporter activity"/>
    <property type="evidence" value="ECO:0007669"/>
    <property type="project" value="UniProtKB-UniRule"/>
</dbReference>
<dbReference type="GO" id="GO:0015889">
    <property type="term" value="P:cobalamin transport"/>
    <property type="evidence" value="ECO:0007669"/>
    <property type="project" value="UniProtKB-UniRule"/>
</dbReference>
<dbReference type="CDD" id="cd06550">
    <property type="entry name" value="TM_ABC_iron-siderophores_like"/>
    <property type="match status" value="1"/>
</dbReference>
<dbReference type="FunFam" id="1.10.3470.10:FF:000001">
    <property type="entry name" value="Vitamin B12 ABC transporter permease BtuC"/>
    <property type="match status" value="1"/>
</dbReference>
<dbReference type="Gene3D" id="1.10.3470.10">
    <property type="entry name" value="ABC transporter involved in vitamin B12 uptake, BtuC"/>
    <property type="match status" value="1"/>
</dbReference>
<dbReference type="HAMAP" id="MF_01004">
    <property type="entry name" value="BtuC"/>
    <property type="match status" value="1"/>
</dbReference>
<dbReference type="InterPro" id="IPR037294">
    <property type="entry name" value="ABC_BtuC-like"/>
</dbReference>
<dbReference type="InterPro" id="IPR023691">
    <property type="entry name" value="ABC_transptr_BtuC"/>
</dbReference>
<dbReference type="InterPro" id="IPR000522">
    <property type="entry name" value="ABC_transptr_permease_BtuC"/>
</dbReference>
<dbReference type="NCBIfam" id="NF003001">
    <property type="entry name" value="PRK03784.1"/>
    <property type="match status" value="1"/>
</dbReference>
<dbReference type="PANTHER" id="PTHR30472">
    <property type="entry name" value="FERRIC ENTEROBACTIN TRANSPORT SYSTEM PERMEASE PROTEIN"/>
    <property type="match status" value="1"/>
</dbReference>
<dbReference type="PANTHER" id="PTHR30472:SF29">
    <property type="entry name" value="VITAMIN B12 IMPORT SYSTEM PERMEASE PROTEIN BTUC"/>
    <property type="match status" value="1"/>
</dbReference>
<dbReference type="Pfam" id="PF01032">
    <property type="entry name" value="FecCD"/>
    <property type="match status" value="1"/>
</dbReference>
<dbReference type="SUPFAM" id="SSF81345">
    <property type="entry name" value="ABC transporter involved in vitamin B12 uptake, BtuC"/>
    <property type="match status" value="1"/>
</dbReference>
<organism>
    <name type="scientific">Escherichia coli O157:H7 (strain EC4115 / EHEC)</name>
    <dbReference type="NCBI Taxonomy" id="444450"/>
    <lineage>
        <taxon>Bacteria</taxon>
        <taxon>Pseudomonadati</taxon>
        <taxon>Pseudomonadota</taxon>
        <taxon>Gammaproteobacteria</taxon>
        <taxon>Enterobacterales</taxon>
        <taxon>Enterobacteriaceae</taxon>
        <taxon>Escherichia</taxon>
    </lineage>
</organism>